<reference key="1">
    <citation type="submission" date="2009-10" db="EMBL/GenBank/DDBJ databases">
        <title>Complete sequence of chromosome of Methanocaldococcus vulcanius M7.</title>
        <authorList>
            <consortium name="US DOE Joint Genome Institute"/>
            <person name="Lucas S."/>
            <person name="Copeland A."/>
            <person name="Lapidus A."/>
            <person name="Glavina del Rio T."/>
            <person name="Dalin E."/>
            <person name="Tice H."/>
            <person name="Bruce D."/>
            <person name="Goodwin L."/>
            <person name="Pitluck S."/>
            <person name="Lcollab F.I."/>
            <person name="Brettin T."/>
            <person name="Detter J.C."/>
            <person name="Han C."/>
            <person name="Tapia R."/>
            <person name="Kuske C.R."/>
            <person name="Schmutz J."/>
            <person name="Larimer F."/>
            <person name="Land M."/>
            <person name="Hauser L."/>
            <person name="Kyrpides N."/>
            <person name="Ovchinikova G."/>
            <person name="Sieprawska-Lupa M."/>
            <person name="Whitman W.B."/>
            <person name="Woyke T."/>
        </authorList>
    </citation>
    <scope>NUCLEOTIDE SEQUENCE [LARGE SCALE GENOMIC DNA]</scope>
    <source>
        <strain>ATCC 700851 / DSM 12094 / M7</strain>
    </source>
</reference>
<proteinExistence type="inferred from homology"/>
<sequence length="183" mass="20258">MLLEETLKSCPIVKRGKYHYFIHPISDGVPLVEPKLLREVATRIIKIGNFEGVNKIVTAEAMGIPLVTTLSLYTDIPYVIMRKREYKLPGEVPVFQSTGYSKGQLYLNGIEKGDKVIIIDDVISTGGTMIAIINALERAGAEIKDIICVIERGDGKKIVEEKTGYKIKTLVKIDVVDGEVVIL</sequence>
<protein>
    <recommendedName>
        <fullName evidence="1">Hypoxanthine/guanine phosphoribosyltransferase</fullName>
        <shortName evidence="1">HGPRTase</shortName>
        <ecNumber evidence="1">2.4.2.8</ecNumber>
    </recommendedName>
</protein>
<comment type="function">
    <text evidence="1">Catalyzes a salvage reaction resulting in the formation of IMP that is energically less costly than de novo synthesis.</text>
</comment>
<comment type="catalytic activity">
    <reaction evidence="1">
        <text>IMP + diphosphate = hypoxanthine + 5-phospho-alpha-D-ribose 1-diphosphate</text>
        <dbReference type="Rhea" id="RHEA:17973"/>
        <dbReference type="ChEBI" id="CHEBI:17368"/>
        <dbReference type="ChEBI" id="CHEBI:33019"/>
        <dbReference type="ChEBI" id="CHEBI:58017"/>
        <dbReference type="ChEBI" id="CHEBI:58053"/>
        <dbReference type="EC" id="2.4.2.8"/>
    </reaction>
</comment>
<comment type="catalytic activity">
    <reaction evidence="1">
        <text>GMP + diphosphate = guanine + 5-phospho-alpha-D-ribose 1-diphosphate</text>
        <dbReference type="Rhea" id="RHEA:25424"/>
        <dbReference type="ChEBI" id="CHEBI:16235"/>
        <dbReference type="ChEBI" id="CHEBI:33019"/>
        <dbReference type="ChEBI" id="CHEBI:58017"/>
        <dbReference type="ChEBI" id="CHEBI:58115"/>
        <dbReference type="EC" id="2.4.2.8"/>
    </reaction>
</comment>
<comment type="pathway">
    <text evidence="1">Purine metabolism; IMP biosynthesis via salvage pathway; IMP from hypoxanthine: step 1/1.</text>
</comment>
<comment type="subunit">
    <text evidence="1">Homodimer.</text>
</comment>
<comment type="subcellular location">
    <subcellularLocation>
        <location evidence="1">Cytoplasm</location>
    </subcellularLocation>
</comment>
<comment type="similarity">
    <text evidence="1">Belongs to the purine/pyrimidine phosphoribosyltransferase family. Archaeal HPRT subfamily.</text>
</comment>
<name>HPRT_METVM</name>
<organism>
    <name type="scientific">Methanocaldococcus vulcanius (strain ATCC 700851 / DSM 12094 / M7)</name>
    <name type="common">Methanococcus vulcanius</name>
    <dbReference type="NCBI Taxonomy" id="579137"/>
    <lineage>
        <taxon>Archaea</taxon>
        <taxon>Methanobacteriati</taxon>
        <taxon>Methanobacteriota</taxon>
        <taxon>Methanomada group</taxon>
        <taxon>Methanococci</taxon>
        <taxon>Methanococcales</taxon>
        <taxon>Methanocaldococcaceae</taxon>
        <taxon>Methanocaldococcus</taxon>
    </lineage>
</organism>
<accession>C9RH78</accession>
<gene>
    <name evidence="1" type="primary">hpt</name>
    <name type="ordered locus">Metvu_1072</name>
</gene>
<feature type="chain" id="PRO_0000415469" description="Hypoxanthine/guanine phosphoribosyltransferase">
    <location>
        <begin position="1"/>
        <end position="183"/>
    </location>
</feature>
<dbReference type="EC" id="2.4.2.8" evidence="1"/>
<dbReference type="EMBL" id="CP001787">
    <property type="protein sequence ID" value="ACX72930.1"/>
    <property type="molecule type" value="Genomic_DNA"/>
</dbReference>
<dbReference type="RefSeq" id="WP_015733150.1">
    <property type="nucleotide sequence ID" value="NC_013407.1"/>
</dbReference>
<dbReference type="SMR" id="C9RH78"/>
<dbReference type="STRING" id="579137.Metvu_1072"/>
<dbReference type="GeneID" id="8513411"/>
<dbReference type="KEGG" id="mvu:Metvu_1072"/>
<dbReference type="eggNOG" id="arCOG00030">
    <property type="taxonomic scope" value="Archaea"/>
</dbReference>
<dbReference type="HOGENOM" id="CLU_126376_0_0_2"/>
<dbReference type="OrthoDB" id="8323at2157"/>
<dbReference type="UniPathway" id="UPA00591">
    <property type="reaction ID" value="UER00648"/>
</dbReference>
<dbReference type="Proteomes" id="UP000002063">
    <property type="component" value="Chromosome"/>
</dbReference>
<dbReference type="GO" id="GO:0005737">
    <property type="term" value="C:cytoplasm"/>
    <property type="evidence" value="ECO:0007669"/>
    <property type="project" value="UniProtKB-SubCell"/>
</dbReference>
<dbReference type="GO" id="GO:0052657">
    <property type="term" value="F:guanine phosphoribosyltransferase activity"/>
    <property type="evidence" value="ECO:0007669"/>
    <property type="project" value="RHEA"/>
</dbReference>
<dbReference type="GO" id="GO:0004422">
    <property type="term" value="F:hypoxanthine phosphoribosyltransferase activity"/>
    <property type="evidence" value="ECO:0007669"/>
    <property type="project" value="UniProtKB-UniRule"/>
</dbReference>
<dbReference type="GO" id="GO:0032264">
    <property type="term" value="P:IMP salvage"/>
    <property type="evidence" value="ECO:0007669"/>
    <property type="project" value="UniProtKB-UniRule"/>
</dbReference>
<dbReference type="GO" id="GO:0006166">
    <property type="term" value="P:purine ribonucleoside salvage"/>
    <property type="evidence" value="ECO:0007669"/>
    <property type="project" value="UniProtKB-KW"/>
</dbReference>
<dbReference type="CDD" id="cd06223">
    <property type="entry name" value="PRTases_typeI"/>
    <property type="match status" value="1"/>
</dbReference>
<dbReference type="Gene3D" id="3.40.50.2020">
    <property type="match status" value="1"/>
</dbReference>
<dbReference type="HAMAP" id="MF_01467">
    <property type="entry name" value="Hypx_phosphoribosyltr"/>
    <property type="match status" value="1"/>
</dbReference>
<dbReference type="InterPro" id="IPR026597">
    <property type="entry name" value="HGPRTase-like"/>
</dbReference>
<dbReference type="InterPro" id="IPR000836">
    <property type="entry name" value="PRibTrfase_dom"/>
</dbReference>
<dbReference type="InterPro" id="IPR029057">
    <property type="entry name" value="PRTase-like"/>
</dbReference>
<dbReference type="InterPro" id="IPR050118">
    <property type="entry name" value="Pur/Pyrimidine_PRTase"/>
</dbReference>
<dbReference type="NCBIfam" id="NF040646">
    <property type="entry name" value="HPT_Archaea"/>
    <property type="match status" value="1"/>
</dbReference>
<dbReference type="NCBIfam" id="NF002635">
    <property type="entry name" value="PRK02304.1-4"/>
    <property type="match status" value="1"/>
</dbReference>
<dbReference type="PANTHER" id="PTHR43864">
    <property type="entry name" value="HYPOXANTHINE/GUANINE PHOSPHORIBOSYLTRANSFERASE"/>
    <property type="match status" value="1"/>
</dbReference>
<dbReference type="PANTHER" id="PTHR43864:SF1">
    <property type="entry name" value="XANTHINE PHOSPHORIBOSYLTRANSFERASE"/>
    <property type="match status" value="1"/>
</dbReference>
<dbReference type="Pfam" id="PF00156">
    <property type="entry name" value="Pribosyltran"/>
    <property type="match status" value="1"/>
</dbReference>
<dbReference type="SUPFAM" id="SSF53271">
    <property type="entry name" value="PRTase-like"/>
    <property type="match status" value="1"/>
</dbReference>
<dbReference type="PROSITE" id="PS00103">
    <property type="entry name" value="PUR_PYR_PR_TRANSFER"/>
    <property type="match status" value="1"/>
</dbReference>
<keyword id="KW-0963">Cytoplasm</keyword>
<keyword id="KW-0328">Glycosyltransferase</keyword>
<keyword id="KW-0660">Purine salvage</keyword>
<keyword id="KW-0808">Transferase</keyword>
<evidence type="ECO:0000255" key="1">
    <source>
        <dbReference type="HAMAP-Rule" id="MF_01467"/>
    </source>
</evidence>